<name>RISB_SHIB3</name>
<keyword id="KW-1185">Reference proteome</keyword>
<keyword id="KW-0686">Riboflavin biosynthesis</keyword>
<keyword id="KW-0808">Transferase</keyword>
<proteinExistence type="inferred from homology"/>
<gene>
    <name evidence="1" type="primary">ribH</name>
    <name type="ordered locus">SbBS512_E0336</name>
</gene>
<comment type="function">
    <text evidence="1">Catalyzes the formation of 6,7-dimethyl-8-ribityllumazine by condensation of 5-amino-6-(D-ribitylamino)uracil with 3,4-dihydroxy-2-butanone 4-phosphate. This is the penultimate step in the biosynthesis of riboflavin.</text>
</comment>
<comment type="catalytic activity">
    <reaction evidence="1">
        <text>(2S)-2-hydroxy-3-oxobutyl phosphate + 5-amino-6-(D-ribitylamino)uracil = 6,7-dimethyl-8-(1-D-ribityl)lumazine + phosphate + 2 H2O + H(+)</text>
        <dbReference type="Rhea" id="RHEA:26152"/>
        <dbReference type="ChEBI" id="CHEBI:15377"/>
        <dbReference type="ChEBI" id="CHEBI:15378"/>
        <dbReference type="ChEBI" id="CHEBI:15934"/>
        <dbReference type="ChEBI" id="CHEBI:43474"/>
        <dbReference type="ChEBI" id="CHEBI:58201"/>
        <dbReference type="ChEBI" id="CHEBI:58830"/>
        <dbReference type="EC" id="2.5.1.78"/>
    </reaction>
</comment>
<comment type="pathway">
    <text evidence="1">Cofactor biosynthesis; riboflavin biosynthesis; riboflavin from 2-hydroxy-3-oxobutyl phosphate and 5-amino-6-(D-ribitylamino)uracil: step 1/2.</text>
</comment>
<comment type="subunit">
    <text evidence="1">Forms an icosahedral capsid composed of 60 subunits, arranged as a dodecamer of pentamers.</text>
</comment>
<comment type="similarity">
    <text evidence="1">Belongs to the DMRL synthase family.</text>
</comment>
<sequence length="156" mass="16157">MNIIEANVATPDARVAITIARFNNFINDSLLEGAIDALKRIGQVKDENITVVWVPGAYELPLAAGALAKTGKYDAVIALGTVIRGGTAHFEYVAGGASNGLAHVAQDSEIPVAFGVLTTESIEQAIERAGTKAGNKGAEAALTALEMINVLKAIKA</sequence>
<feature type="chain" id="PRO_1000098230" description="6,7-dimethyl-8-ribityllumazine synthase">
    <location>
        <begin position="1"/>
        <end position="156"/>
    </location>
</feature>
<feature type="active site" description="Proton donor" evidence="1">
    <location>
        <position position="89"/>
    </location>
</feature>
<feature type="binding site" evidence="1">
    <location>
        <position position="22"/>
    </location>
    <ligand>
        <name>5-amino-6-(D-ribitylamino)uracil</name>
        <dbReference type="ChEBI" id="CHEBI:15934"/>
    </ligand>
</feature>
<feature type="binding site" evidence="1">
    <location>
        <begin position="57"/>
        <end position="59"/>
    </location>
    <ligand>
        <name>5-amino-6-(D-ribitylamino)uracil</name>
        <dbReference type="ChEBI" id="CHEBI:15934"/>
    </ligand>
</feature>
<feature type="binding site" evidence="1">
    <location>
        <begin position="81"/>
        <end position="83"/>
    </location>
    <ligand>
        <name>5-amino-6-(D-ribitylamino)uracil</name>
        <dbReference type="ChEBI" id="CHEBI:15934"/>
    </ligand>
</feature>
<feature type="binding site" evidence="1">
    <location>
        <begin position="86"/>
        <end position="87"/>
    </location>
    <ligand>
        <name>(2S)-2-hydroxy-3-oxobutyl phosphate</name>
        <dbReference type="ChEBI" id="CHEBI:58830"/>
    </ligand>
</feature>
<feature type="binding site" evidence="1">
    <location>
        <position position="114"/>
    </location>
    <ligand>
        <name>5-amino-6-(D-ribitylamino)uracil</name>
        <dbReference type="ChEBI" id="CHEBI:15934"/>
    </ligand>
</feature>
<feature type="binding site" evidence="1">
    <location>
        <position position="128"/>
    </location>
    <ligand>
        <name>(2S)-2-hydroxy-3-oxobutyl phosphate</name>
        <dbReference type="ChEBI" id="CHEBI:58830"/>
    </ligand>
</feature>
<organism>
    <name type="scientific">Shigella boydii serotype 18 (strain CDC 3083-94 / BS512)</name>
    <dbReference type="NCBI Taxonomy" id="344609"/>
    <lineage>
        <taxon>Bacteria</taxon>
        <taxon>Pseudomonadati</taxon>
        <taxon>Pseudomonadota</taxon>
        <taxon>Gammaproteobacteria</taxon>
        <taxon>Enterobacterales</taxon>
        <taxon>Enterobacteriaceae</taxon>
        <taxon>Shigella</taxon>
    </lineage>
</organism>
<protein>
    <recommendedName>
        <fullName evidence="1">6,7-dimethyl-8-ribityllumazine synthase</fullName>
        <shortName evidence="1">DMRL synthase</shortName>
        <shortName evidence="1">LS</shortName>
        <shortName evidence="1">Lumazine synthase</shortName>
        <ecNumber evidence="1">2.5.1.78</ecNumber>
    </recommendedName>
</protein>
<dbReference type="EC" id="2.5.1.78" evidence="1"/>
<dbReference type="EMBL" id="CP001063">
    <property type="protein sequence ID" value="ACD08647.1"/>
    <property type="molecule type" value="Genomic_DNA"/>
</dbReference>
<dbReference type="SMR" id="B2U4L8"/>
<dbReference type="STRING" id="344609.SbBS512_E0336"/>
<dbReference type="KEGG" id="sbc:SbBS512_E0336"/>
<dbReference type="HOGENOM" id="CLU_089358_1_1_6"/>
<dbReference type="UniPathway" id="UPA00275">
    <property type="reaction ID" value="UER00404"/>
</dbReference>
<dbReference type="Proteomes" id="UP000001030">
    <property type="component" value="Chromosome"/>
</dbReference>
<dbReference type="GO" id="GO:0005829">
    <property type="term" value="C:cytosol"/>
    <property type="evidence" value="ECO:0007669"/>
    <property type="project" value="TreeGrafter"/>
</dbReference>
<dbReference type="GO" id="GO:0009349">
    <property type="term" value="C:riboflavin synthase complex"/>
    <property type="evidence" value="ECO:0007669"/>
    <property type="project" value="InterPro"/>
</dbReference>
<dbReference type="GO" id="GO:0000906">
    <property type="term" value="F:6,7-dimethyl-8-ribityllumazine synthase activity"/>
    <property type="evidence" value="ECO:0007669"/>
    <property type="project" value="UniProtKB-UniRule"/>
</dbReference>
<dbReference type="GO" id="GO:0009231">
    <property type="term" value="P:riboflavin biosynthetic process"/>
    <property type="evidence" value="ECO:0007669"/>
    <property type="project" value="UniProtKB-UniRule"/>
</dbReference>
<dbReference type="CDD" id="cd09209">
    <property type="entry name" value="Lumazine_synthase-I"/>
    <property type="match status" value="1"/>
</dbReference>
<dbReference type="FunFam" id="3.40.50.960:FF:000001">
    <property type="entry name" value="6,7-dimethyl-8-ribityllumazine synthase"/>
    <property type="match status" value="1"/>
</dbReference>
<dbReference type="Gene3D" id="3.40.50.960">
    <property type="entry name" value="Lumazine/riboflavin synthase"/>
    <property type="match status" value="1"/>
</dbReference>
<dbReference type="HAMAP" id="MF_00178">
    <property type="entry name" value="Lumazine_synth"/>
    <property type="match status" value="1"/>
</dbReference>
<dbReference type="InterPro" id="IPR034964">
    <property type="entry name" value="LS"/>
</dbReference>
<dbReference type="InterPro" id="IPR002180">
    <property type="entry name" value="LS/RS"/>
</dbReference>
<dbReference type="InterPro" id="IPR036467">
    <property type="entry name" value="LS/RS_sf"/>
</dbReference>
<dbReference type="NCBIfam" id="TIGR00114">
    <property type="entry name" value="lumazine-synth"/>
    <property type="match status" value="1"/>
</dbReference>
<dbReference type="NCBIfam" id="NF000812">
    <property type="entry name" value="PRK00061.1-4"/>
    <property type="match status" value="1"/>
</dbReference>
<dbReference type="PANTHER" id="PTHR21058:SF0">
    <property type="entry name" value="6,7-DIMETHYL-8-RIBITYLLUMAZINE SYNTHASE"/>
    <property type="match status" value="1"/>
</dbReference>
<dbReference type="PANTHER" id="PTHR21058">
    <property type="entry name" value="6,7-DIMETHYL-8-RIBITYLLUMAZINE SYNTHASE DMRL SYNTHASE LUMAZINE SYNTHASE"/>
    <property type="match status" value="1"/>
</dbReference>
<dbReference type="Pfam" id="PF00885">
    <property type="entry name" value="DMRL_synthase"/>
    <property type="match status" value="1"/>
</dbReference>
<dbReference type="SUPFAM" id="SSF52121">
    <property type="entry name" value="Lumazine synthase"/>
    <property type="match status" value="1"/>
</dbReference>
<accession>B2U4L8</accession>
<reference key="1">
    <citation type="submission" date="2008-05" db="EMBL/GenBank/DDBJ databases">
        <title>Complete sequence of Shigella boydii serotype 18 strain BS512.</title>
        <authorList>
            <person name="Rasko D.A."/>
            <person name="Rosovitz M."/>
            <person name="Maurelli A.T."/>
            <person name="Myers G."/>
            <person name="Seshadri R."/>
            <person name="Cer R."/>
            <person name="Jiang L."/>
            <person name="Ravel J."/>
            <person name="Sebastian Y."/>
        </authorList>
    </citation>
    <scope>NUCLEOTIDE SEQUENCE [LARGE SCALE GENOMIC DNA]</scope>
    <source>
        <strain>CDC 3083-94 / BS512</strain>
    </source>
</reference>
<evidence type="ECO:0000255" key="1">
    <source>
        <dbReference type="HAMAP-Rule" id="MF_00178"/>
    </source>
</evidence>